<evidence type="ECO:0000250" key="1"/>
<evidence type="ECO:0000255" key="2">
    <source>
        <dbReference type="HAMAP-Rule" id="MF_00062"/>
    </source>
</evidence>
<dbReference type="EC" id="2.7.7.4" evidence="2"/>
<dbReference type="EMBL" id="CP000026">
    <property type="protein sequence ID" value="AAV78645.1"/>
    <property type="molecule type" value="Genomic_DNA"/>
</dbReference>
<dbReference type="RefSeq" id="WP_001092272.1">
    <property type="nucleotide sequence ID" value="NC_006511.1"/>
</dbReference>
<dbReference type="SMR" id="Q5PEH2"/>
<dbReference type="KEGG" id="spt:SPA2790"/>
<dbReference type="HOGENOM" id="CLU_007265_5_2_6"/>
<dbReference type="UniPathway" id="UPA00140">
    <property type="reaction ID" value="UER00204"/>
</dbReference>
<dbReference type="Proteomes" id="UP000008185">
    <property type="component" value="Chromosome"/>
</dbReference>
<dbReference type="GO" id="GO:0005524">
    <property type="term" value="F:ATP binding"/>
    <property type="evidence" value="ECO:0007669"/>
    <property type="project" value="UniProtKB-KW"/>
</dbReference>
<dbReference type="GO" id="GO:0005525">
    <property type="term" value="F:GTP binding"/>
    <property type="evidence" value="ECO:0007669"/>
    <property type="project" value="UniProtKB-UniRule"/>
</dbReference>
<dbReference type="GO" id="GO:0003924">
    <property type="term" value="F:GTPase activity"/>
    <property type="evidence" value="ECO:0007669"/>
    <property type="project" value="InterPro"/>
</dbReference>
<dbReference type="GO" id="GO:0004781">
    <property type="term" value="F:sulfate adenylyltransferase (ATP) activity"/>
    <property type="evidence" value="ECO:0007669"/>
    <property type="project" value="UniProtKB-UniRule"/>
</dbReference>
<dbReference type="GO" id="GO:0070814">
    <property type="term" value="P:hydrogen sulfide biosynthetic process"/>
    <property type="evidence" value="ECO:0007669"/>
    <property type="project" value="UniProtKB-UniRule"/>
</dbReference>
<dbReference type="GO" id="GO:0000103">
    <property type="term" value="P:sulfate assimilation"/>
    <property type="evidence" value="ECO:0007669"/>
    <property type="project" value="UniProtKB-UniRule"/>
</dbReference>
<dbReference type="CDD" id="cd04166">
    <property type="entry name" value="CysN_ATPS"/>
    <property type="match status" value="1"/>
</dbReference>
<dbReference type="CDD" id="cd03695">
    <property type="entry name" value="CysN_NodQ_II"/>
    <property type="match status" value="1"/>
</dbReference>
<dbReference type="CDD" id="cd04095">
    <property type="entry name" value="CysN_NoDQ_III"/>
    <property type="match status" value="1"/>
</dbReference>
<dbReference type="FunFam" id="2.40.30.10:FF:000027">
    <property type="entry name" value="Sulfate adenylyltransferase subunit 1"/>
    <property type="match status" value="1"/>
</dbReference>
<dbReference type="FunFam" id="2.40.30.10:FF:000031">
    <property type="entry name" value="Sulfate adenylyltransferase subunit 1"/>
    <property type="match status" value="1"/>
</dbReference>
<dbReference type="FunFam" id="3.40.50.300:FF:000119">
    <property type="entry name" value="Sulfate adenylyltransferase subunit 1"/>
    <property type="match status" value="1"/>
</dbReference>
<dbReference type="Gene3D" id="3.40.50.300">
    <property type="entry name" value="P-loop containing nucleotide triphosphate hydrolases"/>
    <property type="match status" value="1"/>
</dbReference>
<dbReference type="Gene3D" id="2.40.30.10">
    <property type="entry name" value="Translation factors"/>
    <property type="match status" value="2"/>
</dbReference>
<dbReference type="HAMAP" id="MF_00062">
    <property type="entry name" value="Sulf_adenylyltr_sub1"/>
    <property type="match status" value="1"/>
</dbReference>
<dbReference type="InterPro" id="IPR041757">
    <property type="entry name" value="CysN_GTP-bd"/>
</dbReference>
<dbReference type="InterPro" id="IPR044138">
    <property type="entry name" value="CysN_II"/>
</dbReference>
<dbReference type="InterPro" id="IPR044139">
    <property type="entry name" value="CysN_NoDQ_III"/>
</dbReference>
<dbReference type="InterPro" id="IPR031157">
    <property type="entry name" value="G_TR_CS"/>
</dbReference>
<dbReference type="InterPro" id="IPR054696">
    <property type="entry name" value="GTP-eEF1A_C"/>
</dbReference>
<dbReference type="InterPro" id="IPR027417">
    <property type="entry name" value="P-loop_NTPase"/>
</dbReference>
<dbReference type="InterPro" id="IPR005225">
    <property type="entry name" value="Small_GTP-bd"/>
</dbReference>
<dbReference type="InterPro" id="IPR011779">
    <property type="entry name" value="SO4_adenylTrfase_lsu"/>
</dbReference>
<dbReference type="InterPro" id="IPR000795">
    <property type="entry name" value="T_Tr_GTP-bd_dom"/>
</dbReference>
<dbReference type="InterPro" id="IPR050100">
    <property type="entry name" value="TRAFAC_GTPase_members"/>
</dbReference>
<dbReference type="InterPro" id="IPR009000">
    <property type="entry name" value="Transl_B-barrel_sf"/>
</dbReference>
<dbReference type="InterPro" id="IPR009001">
    <property type="entry name" value="Transl_elong_EF1A/Init_IF2_C"/>
</dbReference>
<dbReference type="NCBIfam" id="TIGR02034">
    <property type="entry name" value="CysN"/>
    <property type="match status" value="1"/>
</dbReference>
<dbReference type="NCBIfam" id="NF003478">
    <property type="entry name" value="PRK05124.1"/>
    <property type="match status" value="1"/>
</dbReference>
<dbReference type="NCBIfam" id="TIGR00231">
    <property type="entry name" value="small_GTP"/>
    <property type="match status" value="1"/>
</dbReference>
<dbReference type="PANTHER" id="PTHR23115">
    <property type="entry name" value="TRANSLATION FACTOR"/>
    <property type="match status" value="1"/>
</dbReference>
<dbReference type="Pfam" id="PF22594">
    <property type="entry name" value="GTP-eEF1A_C"/>
    <property type="match status" value="1"/>
</dbReference>
<dbReference type="Pfam" id="PF00009">
    <property type="entry name" value="GTP_EFTU"/>
    <property type="match status" value="1"/>
</dbReference>
<dbReference type="PRINTS" id="PR00315">
    <property type="entry name" value="ELONGATNFCT"/>
</dbReference>
<dbReference type="SUPFAM" id="SSF50465">
    <property type="entry name" value="EF-Tu/eEF-1alpha/eIF2-gamma C-terminal domain"/>
    <property type="match status" value="1"/>
</dbReference>
<dbReference type="SUPFAM" id="SSF52540">
    <property type="entry name" value="P-loop containing nucleoside triphosphate hydrolases"/>
    <property type="match status" value="1"/>
</dbReference>
<dbReference type="SUPFAM" id="SSF50447">
    <property type="entry name" value="Translation proteins"/>
    <property type="match status" value="1"/>
</dbReference>
<dbReference type="PROSITE" id="PS00301">
    <property type="entry name" value="G_TR_1"/>
    <property type="match status" value="1"/>
</dbReference>
<dbReference type="PROSITE" id="PS51722">
    <property type="entry name" value="G_TR_2"/>
    <property type="match status" value="1"/>
</dbReference>
<accession>Q5PEH2</accession>
<keyword id="KW-0067">ATP-binding</keyword>
<keyword id="KW-0342">GTP-binding</keyword>
<keyword id="KW-0547">Nucleotide-binding</keyword>
<keyword id="KW-0548">Nucleotidyltransferase</keyword>
<keyword id="KW-0808">Transferase</keyword>
<protein>
    <recommendedName>
        <fullName evidence="2">Sulfate adenylyltransferase subunit 1</fullName>
        <ecNumber evidence="2">2.7.7.4</ecNumber>
    </recommendedName>
    <alternativeName>
        <fullName evidence="2">ATP-sulfurylase large subunit</fullName>
    </alternativeName>
    <alternativeName>
        <fullName evidence="2">Sulfate adenylate transferase</fullName>
        <shortName evidence="2">SAT</shortName>
    </alternativeName>
</protein>
<comment type="function">
    <text evidence="2">With CysD forms the ATP sulfurylase (ATPS) that catalyzes the adenylation of sulfate producing adenosine 5'-phosphosulfate (APS) and diphosphate, the first enzymatic step in sulfur assimilation pathway. APS synthesis involves the formation of a high-energy phosphoric-sulfuric acid anhydride bond driven by GTP hydrolysis by CysN coupled to ATP hydrolysis by CysD.</text>
</comment>
<comment type="catalytic activity">
    <reaction evidence="2">
        <text>sulfate + ATP + H(+) = adenosine 5'-phosphosulfate + diphosphate</text>
        <dbReference type="Rhea" id="RHEA:18133"/>
        <dbReference type="ChEBI" id="CHEBI:15378"/>
        <dbReference type="ChEBI" id="CHEBI:16189"/>
        <dbReference type="ChEBI" id="CHEBI:30616"/>
        <dbReference type="ChEBI" id="CHEBI:33019"/>
        <dbReference type="ChEBI" id="CHEBI:58243"/>
        <dbReference type="EC" id="2.7.7.4"/>
    </reaction>
</comment>
<comment type="pathway">
    <text evidence="2">Sulfur metabolism; hydrogen sulfide biosynthesis; sulfite from sulfate: step 1/3.</text>
</comment>
<comment type="subunit">
    <text evidence="2">Heterodimer composed of CysD, the smaller subunit, and CysN.</text>
</comment>
<comment type="similarity">
    <text evidence="2">Belongs to the TRAFAC class translation factor GTPase superfamily. Classic translation factor GTPase family. CysN/NodQ subfamily.</text>
</comment>
<gene>
    <name evidence="2" type="primary">cysN</name>
    <name type="ordered locus">SPA2790</name>
</gene>
<reference key="1">
    <citation type="journal article" date="2004" name="Nat. Genet.">
        <title>Comparison of genome degradation in Paratyphi A and Typhi, human-restricted serovars of Salmonella enterica that cause typhoid.</title>
        <authorList>
            <person name="McClelland M."/>
            <person name="Sanderson K.E."/>
            <person name="Clifton S.W."/>
            <person name="Latreille P."/>
            <person name="Porwollik S."/>
            <person name="Sabo A."/>
            <person name="Meyer R."/>
            <person name="Bieri T."/>
            <person name="Ozersky P."/>
            <person name="McLellan M."/>
            <person name="Harkins C.R."/>
            <person name="Wang C."/>
            <person name="Nguyen C."/>
            <person name="Berghoff A."/>
            <person name="Elliott G."/>
            <person name="Kohlberg S."/>
            <person name="Strong C."/>
            <person name="Du F."/>
            <person name="Carter J."/>
            <person name="Kremizki C."/>
            <person name="Layman D."/>
            <person name="Leonard S."/>
            <person name="Sun H."/>
            <person name="Fulton L."/>
            <person name="Nash W."/>
            <person name="Miner T."/>
            <person name="Minx P."/>
            <person name="Delehaunty K."/>
            <person name="Fronick C."/>
            <person name="Magrini V."/>
            <person name="Nhan M."/>
            <person name="Warren W."/>
            <person name="Florea L."/>
            <person name="Spieth J."/>
            <person name="Wilson R.K."/>
        </authorList>
    </citation>
    <scope>NUCLEOTIDE SEQUENCE [LARGE SCALE GENOMIC DNA]</scope>
    <source>
        <strain>ATCC 9150 / SARB42</strain>
    </source>
</reference>
<sequence>MNTILAQQIASEGGVEAWMIAQQHKSLLRFLTCGSVDDGKSTLIGRLLHDTLQIYEDQLSSLHNDSKRHGTQGEKLDLALLVDGLQAEREQGITIDVAYRYFSTEKRKFIIADTPGHEQYTRNMATGASTCDLAILLIDARKGVLDQTRRHSFISTLLGIKHLVVAINKMDLVDYREETFARIREDYLTFAEQLPGDLDIRFVPLSALEGDNVAAQSANMRWYSGPTLLEVLETVDIQRAVDRQPMRFPVQYVNRPNLDFRGYAGTLASGSVKVGERIKMLPSGVESSVARIVTFDGDKEEACAGEAITLVLNDDIDISRGDLLLAANETLAPARHAAIDVVWMAEQPLAPGQSYDVKLAGKKTRARIEAICYQIDINNLTQRDVESLPLNGIGLVEMTFDEPLALDIYQQNPVTGGLIFIDRLSNVTVGAGMVRELDERGATPPVEYSAFELELNALVRRHFPHWDARDLLGDKHGAA</sequence>
<organism>
    <name type="scientific">Salmonella paratyphi A (strain ATCC 9150 / SARB42)</name>
    <dbReference type="NCBI Taxonomy" id="295319"/>
    <lineage>
        <taxon>Bacteria</taxon>
        <taxon>Pseudomonadati</taxon>
        <taxon>Pseudomonadota</taxon>
        <taxon>Gammaproteobacteria</taxon>
        <taxon>Enterobacterales</taxon>
        <taxon>Enterobacteriaceae</taxon>
        <taxon>Salmonella</taxon>
    </lineage>
</organism>
<proteinExistence type="inferred from homology"/>
<feature type="chain" id="PRO_1000008908" description="Sulfate adenylyltransferase subunit 1">
    <location>
        <begin position="1"/>
        <end position="479"/>
    </location>
</feature>
<feature type="domain" description="tr-type G">
    <location>
        <begin position="25"/>
        <end position="239"/>
    </location>
</feature>
<feature type="region of interest" description="G1" evidence="1">
    <location>
        <begin position="34"/>
        <end position="41"/>
    </location>
</feature>
<feature type="region of interest" description="G2" evidence="1">
    <location>
        <begin position="92"/>
        <end position="96"/>
    </location>
</feature>
<feature type="region of interest" description="G3" evidence="1">
    <location>
        <begin position="113"/>
        <end position="116"/>
    </location>
</feature>
<feature type="region of interest" description="G4" evidence="1">
    <location>
        <begin position="168"/>
        <end position="171"/>
    </location>
</feature>
<feature type="region of interest" description="G5" evidence="1">
    <location>
        <begin position="206"/>
        <end position="208"/>
    </location>
</feature>
<feature type="binding site" evidence="2">
    <location>
        <begin position="34"/>
        <end position="41"/>
    </location>
    <ligand>
        <name>GTP</name>
        <dbReference type="ChEBI" id="CHEBI:37565"/>
    </ligand>
</feature>
<feature type="binding site" evidence="2">
    <location>
        <begin position="113"/>
        <end position="117"/>
    </location>
    <ligand>
        <name>GTP</name>
        <dbReference type="ChEBI" id="CHEBI:37565"/>
    </ligand>
</feature>
<feature type="binding site" evidence="2">
    <location>
        <begin position="168"/>
        <end position="171"/>
    </location>
    <ligand>
        <name>GTP</name>
        <dbReference type="ChEBI" id="CHEBI:37565"/>
    </ligand>
</feature>
<name>CYSN_SALPA</name>